<gene>
    <name evidence="1" type="primary">trmD</name>
    <name type="ordered locus">Cbei_1179</name>
</gene>
<dbReference type="EC" id="2.1.1.228" evidence="1"/>
<dbReference type="EMBL" id="CP000721">
    <property type="protein sequence ID" value="ABR33361.1"/>
    <property type="molecule type" value="Genomic_DNA"/>
</dbReference>
<dbReference type="RefSeq" id="WP_011968516.1">
    <property type="nucleotide sequence ID" value="NC_009617.1"/>
</dbReference>
<dbReference type="SMR" id="A6LSN1"/>
<dbReference type="GeneID" id="66344169"/>
<dbReference type="KEGG" id="cbe:Cbei_1179"/>
<dbReference type="eggNOG" id="COG0336">
    <property type="taxonomic scope" value="Bacteria"/>
</dbReference>
<dbReference type="HOGENOM" id="CLU_047363_0_1_9"/>
<dbReference type="Proteomes" id="UP000000565">
    <property type="component" value="Chromosome"/>
</dbReference>
<dbReference type="GO" id="GO:0005829">
    <property type="term" value="C:cytosol"/>
    <property type="evidence" value="ECO:0007669"/>
    <property type="project" value="TreeGrafter"/>
</dbReference>
<dbReference type="GO" id="GO:0052906">
    <property type="term" value="F:tRNA (guanine(37)-N1)-methyltransferase activity"/>
    <property type="evidence" value="ECO:0007669"/>
    <property type="project" value="UniProtKB-UniRule"/>
</dbReference>
<dbReference type="GO" id="GO:0002939">
    <property type="term" value="P:tRNA N1-guanine methylation"/>
    <property type="evidence" value="ECO:0007669"/>
    <property type="project" value="TreeGrafter"/>
</dbReference>
<dbReference type="CDD" id="cd18080">
    <property type="entry name" value="TrmD-like"/>
    <property type="match status" value="1"/>
</dbReference>
<dbReference type="FunFam" id="1.10.1270.20:FF:000001">
    <property type="entry name" value="tRNA (guanine-N(1)-)-methyltransferase"/>
    <property type="match status" value="1"/>
</dbReference>
<dbReference type="FunFam" id="3.40.1280.10:FF:000001">
    <property type="entry name" value="tRNA (guanine-N(1)-)-methyltransferase"/>
    <property type="match status" value="1"/>
</dbReference>
<dbReference type="Gene3D" id="3.40.1280.10">
    <property type="match status" value="1"/>
</dbReference>
<dbReference type="Gene3D" id="1.10.1270.20">
    <property type="entry name" value="tRNA(m1g37)methyltransferase, domain 2"/>
    <property type="match status" value="1"/>
</dbReference>
<dbReference type="HAMAP" id="MF_00605">
    <property type="entry name" value="TrmD"/>
    <property type="match status" value="1"/>
</dbReference>
<dbReference type="InterPro" id="IPR029028">
    <property type="entry name" value="Alpha/beta_knot_MTases"/>
</dbReference>
<dbReference type="InterPro" id="IPR023148">
    <property type="entry name" value="tRNA_m1G_MeTrfase_C_sf"/>
</dbReference>
<dbReference type="InterPro" id="IPR002649">
    <property type="entry name" value="tRNA_m1G_MeTrfase_TrmD"/>
</dbReference>
<dbReference type="InterPro" id="IPR029026">
    <property type="entry name" value="tRNA_m1G_MTases_N"/>
</dbReference>
<dbReference type="InterPro" id="IPR016009">
    <property type="entry name" value="tRNA_MeTrfase_TRMD/TRM10"/>
</dbReference>
<dbReference type="NCBIfam" id="NF000648">
    <property type="entry name" value="PRK00026.1"/>
    <property type="match status" value="1"/>
</dbReference>
<dbReference type="NCBIfam" id="TIGR00088">
    <property type="entry name" value="trmD"/>
    <property type="match status" value="1"/>
</dbReference>
<dbReference type="PANTHER" id="PTHR46417">
    <property type="entry name" value="TRNA (GUANINE-N(1)-)-METHYLTRANSFERASE"/>
    <property type="match status" value="1"/>
</dbReference>
<dbReference type="PANTHER" id="PTHR46417:SF1">
    <property type="entry name" value="TRNA (GUANINE-N(1)-)-METHYLTRANSFERASE"/>
    <property type="match status" value="1"/>
</dbReference>
<dbReference type="Pfam" id="PF01746">
    <property type="entry name" value="tRNA_m1G_MT"/>
    <property type="match status" value="1"/>
</dbReference>
<dbReference type="PIRSF" id="PIRSF000386">
    <property type="entry name" value="tRNA_mtase"/>
    <property type="match status" value="1"/>
</dbReference>
<dbReference type="SUPFAM" id="SSF75217">
    <property type="entry name" value="alpha/beta knot"/>
    <property type="match status" value="1"/>
</dbReference>
<reference key="1">
    <citation type="submission" date="2007-06" db="EMBL/GenBank/DDBJ databases">
        <title>Complete sequence of Clostridium beijerinckii NCIMB 8052.</title>
        <authorList>
            <consortium name="US DOE Joint Genome Institute"/>
            <person name="Copeland A."/>
            <person name="Lucas S."/>
            <person name="Lapidus A."/>
            <person name="Barry K."/>
            <person name="Detter J.C."/>
            <person name="Glavina del Rio T."/>
            <person name="Hammon N."/>
            <person name="Israni S."/>
            <person name="Dalin E."/>
            <person name="Tice H."/>
            <person name="Pitluck S."/>
            <person name="Sims D."/>
            <person name="Brettin T."/>
            <person name="Bruce D."/>
            <person name="Tapia R."/>
            <person name="Brainard J."/>
            <person name="Schmutz J."/>
            <person name="Larimer F."/>
            <person name="Land M."/>
            <person name="Hauser L."/>
            <person name="Kyrpides N."/>
            <person name="Mikhailova N."/>
            <person name="Bennet G."/>
            <person name="Cann I."/>
            <person name="Chen J.-S."/>
            <person name="Contreras A.L."/>
            <person name="Jones D."/>
            <person name="Kashket E."/>
            <person name="Mitchell W."/>
            <person name="Stoddard S."/>
            <person name="Schwarz W."/>
            <person name="Qureshi N."/>
            <person name="Young M."/>
            <person name="Shi Z."/>
            <person name="Ezeji T."/>
            <person name="White B."/>
            <person name="Blaschek H."/>
            <person name="Richardson P."/>
        </authorList>
    </citation>
    <scope>NUCLEOTIDE SEQUENCE [LARGE SCALE GENOMIC DNA]</scope>
    <source>
        <strain>ATCC 51743 / NCIMB 8052</strain>
    </source>
</reference>
<accession>A6LSN1</accession>
<organism>
    <name type="scientific">Clostridium beijerinckii (strain ATCC 51743 / NCIMB 8052)</name>
    <name type="common">Clostridium acetobutylicum</name>
    <dbReference type="NCBI Taxonomy" id="290402"/>
    <lineage>
        <taxon>Bacteria</taxon>
        <taxon>Bacillati</taxon>
        <taxon>Bacillota</taxon>
        <taxon>Clostridia</taxon>
        <taxon>Eubacteriales</taxon>
        <taxon>Clostridiaceae</taxon>
        <taxon>Clostridium</taxon>
    </lineage>
</organism>
<protein>
    <recommendedName>
        <fullName evidence="1">tRNA (guanine-N(1)-)-methyltransferase</fullName>
        <ecNumber evidence="1">2.1.1.228</ecNumber>
    </recommendedName>
    <alternativeName>
        <fullName evidence="1">M1G-methyltransferase</fullName>
    </alternativeName>
    <alternativeName>
        <fullName evidence="1">tRNA [GM37] methyltransferase</fullName>
    </alternativeName>
</protein>
<feature type="chain" id="PRO_1000082511" description="tRNA (guanine-N(1)-)-methyltransferase">
    <location>
        <begin position="1"/>
        <end position="239"/>
    </location>
</feature>
<feature type="binding site" evidence="1">
    <location>
        <position position="110"/>
    </location>
    <ligand>
        <name>S-adenosyl-L-methionine</name>
        <dbReference type="ChEBI" id="CHEBI:59789"/>
    </ligand>
</feature>
<feature type="binding site" evidence="1">
    <location>
        <begin position="129"/>
        <end position="134"/>
    </location>
    <ligand>
        <name>S-adenosyl-L-methionine</name>
        <dbReference type="ChEBI" id="CHEBI:59789"/>
    </ligand>
</feature>
<comment type="function">
    <text evidence="1">Specifically methylates guanosine-37 in various tRNAs.</text>
</comment>
<comment type="catalytic activity">
    <reaction evidence="1">
        <text>guanosine(37) in tRNA + S-adenosyl-L-methionine = N(1)-methylguanosine(37) in tRNA + S-adenosyl-L-homocysteine + H(+)</text>
        <dbReference type="Rhea" id="RHEA:36899"/>
        <dbReference type="Rhea" id="RHEA-COMP:10145"/>
        <dbReference type="Rhea" id="RHEA-COMP:10147"/>
        <dbReference type="ChEBI" id="CHEBI:15378"/>
        <dbReference type="ChEBI" id="CHEBI:57856"/>
        <dbReference type="ChEBI" id="CHEBI:59789"/>
        <dbReference type="ChEBI" id="CHEBI:73542"/>
        <dbReference type="ChEBI" id="CHEBI:74269"/>
        <dbReference type="EC" id="2.1.1.228"/>
    </reaction>
</comment>
<comment type="subunit">
    <text evidence="1">Homodimer.</text>
</comment>
<comment type="subcellular location">
    <subcellularLocation>
        <location evidence="1">Cytoplasm</location>
    </subcellularLocation>
</comment>
<comment type="similarity">
    <text evidence="1">Belongs to the RNA methyltransferase TrmD family.</text>
</comment>
<keyword id="KW-0963">Cytoplasm</keyword>
<keyword id="KW-0489">Methyltransferase</keyword>
<keyword id="KW-0949">S-adenosyl-L-methionine</keyword>
<keyword id="KW-0808">Transferase</keyword>
<keyword id="KW-0819">tRNA processing</keyword>
<name>TRMD_CLOB8</name>
<proteinExistence type="inferred from homology"/>
<evidence type="ECO:0000255" key="1">
    <source>
        <dbReference type="HAMAP-Rule" id="MF_00605"/>
    </source>
</evidence>
<sequence length="239" mass="27416">MKISILTLFPEMFSIFDHSIIGRARENNIVDLETLNIRDYTLNKHKKVDDYPYGGGAGMVMAPQPIVDTIRDAKLSNKGKVVFLGPRGKTFNQEIAKELSKEEGLIFLCGHYEGIDERVYKHIDMEISLGDFVLTGGEMAAIPVIDCILRLIPGVLGKEESFMEESFYNGLLEYPQYTRPEEFEGDKVPEILLSGHHENIRKWRRLKSLEVTKKIRPDLYKKITLTKEDIKILKNKNNK</sequence>